<sequence>MLGALLLSGAVHAAVQPLDSVVAIVDNDVIMKSQMDQRVREVQQTIAKRGSGVPPAADLQPQVLDRLILENLQLQMGERSGIRVSDDELNQAIGTIAQRNNMSVEQFRAALAHDGLSYEDAREQVRREMIISRVRQRRVAERIQVSEQEVKNFLASDQGKAQLSEEFHLANILIATPDSASSDAIQAAAVKAKSIYDQLKKGADFAKIAATTSSSENALEGGDMGWRKAAQLPPPFGDMLSSMPIGDVTPPARTPGGFIILKLLEKRGGQGQAQMRDEVHVRHILIKPSEIRSEEATKLLAQKIYERIENGEDFATLAKSFSEDPGSALNGGDLNWVDPNSLVPEFRDVMSSTPQGELSKPFKTAYGWHVLEVLGRRATDATGQARDQQALSVLRNRKYDEELQTWLRQIRDEAYVEIKLPGATQAAQ</sequence>
<gene>
    <name evidence="1" type="primary">surA</name>
    <name type="ordered locus">PSPTO_0553</name>
</gene>
<organism>
    <name type="scientific">Pseudomonas syringae pv. tomato (strain ATCC BAA-871 / DC3000)</name>
    <dbReference type="NCBI Taxonomy" id="223283"/>
    <lineage>
        <taxon>Bacteria</taxon>
        <taxon>Pseudomonadati</taxon>
        <taxon>Pseudomonadota</taxon>
        <taxon>Gammaproteobacteria</taxon>
        <taxon>Pseudomonadales</taxon>
        <taxon>Pseudomonadaceae</taxon>
        <taxon>Pseudomonas</taxon>
    </lineage>
</organism>
<evidence type="ECO:0000255" key="1">
    <source>
        <dbReference type="HAMAP-Rule" id="MF_01183"/>
    </source>
</evidence>
<dbReference type="EC" id="5.2.1.8" evidence="1"/>
<dbReference type="EMBL" id="AE016853">
    <property type="protein sequence ID" value="AAO54095.1"/>
    <property type="molecule type" value="Genomic_DNA"/>
</dbReference>
<dbReference type="RefSeq" id="NP_790400.1">
    <property type="nucleotide sequence ID" value="NC_004578.1"/>
</dbReference>
<dbReference type="SMR" id="Q88A44"/>
<dbReference type="STRING" id="223283.PSPTO_0553"/>
<dbReference type="KEGG" id="pst:PSPTO_0553"/>
<dbReference type="PATRIC" id="fig|223283.9.peg.563"/>
<dbReference type="eggNOG" id="COG0760">
    <property type="taxonomic scope" value="Bacteria"/>
</dbReference>
<dbReference type="HOGENOM" id="CLU_034646_11_0_6"/>
<dbReference type="OrthoDB" id="14196at2"/>
<dbReference type="PhylomeDB" id="Q88A44"/>
<dbReference type="Proteomes" id="UP000002515">
    <property type="component" value="Chromosome"/>
</dbReference>
<dbReference type="GO" id="GO:0030288">
    <property type="term" value="C:outer membrane-bounded periplasmic space"/>
    <property type="evidence" value="ECO:0007669"/>
    <property type="project" value="InterPro"/>
</dbReference>
<dbReference type="GO" id="GO:0042277">
    <property type="term" value="F:peptide binding"/>
    <property type="evidence" value="ECO:0007669"/>
    <property type="project" value="InterPro"/>
</dbReference>
<dbReference type="GO" id="GO:0003755">
    <property type="term" value="F:peptidyl-prolyl cis-trans isomerase activity"/>
    <property type="evidence" value="ECO:0007669"/>
    <property type="project" value="UniProtKB-UniRule"/>
</dbReference>
<dbReference type="GO" id="GO:0051082">
    <property type="term" value="F:unfolded protein binding"/>
    <property type="evidence" value="ECO:0007669"/>
    <property type="project" value="UniProtKB-UniRule"/>
</dbReference>
<dbReference type="GO" id="GO:0043165">
    <property type="term" value="P:Gram-negative-bacterium-type cell outer membrane assembly"/>
    <property type="evidence" value="ECO:0007669"/>
    <property type="project" value="InterPro"/>
</dbReference>
<dbReference type="GO" id="GO:0006457">
    <property type="term" value="P:protein folding"/>
    <property type="evidence" value="ECO:0007669"/>
    <property type="project" value="UniProtKB-UniRule"/>
</dbReference>
<dbReference type="GO" id="GO:0050821">
    <property type="term" value="P:protein stabilization"/>
    <property type="evidence" value="ECO:0007669"/>
    <property type="project" value="InterPro"/>
</dbReference>
<dbReference type="Gene3D" id="3.10.50.40">
    <property type="match status" value="2"/>
</dbReference>
<dbReference type="Gene3D" id="1.10.4030.10">
    <property type="entry name" value="Porin chaperone SurA, peptide-binding domain"/>
    <property type="match status" value="1"/>
</dbReference>
<dbReference type="HAMAP" id="MF_01183">
    <property type="entry name" value="Chaperone_SurA"/>
    <property type="match status" value="1"/>
</dbReference>
<dbReference type="InterPro" id="IPR050280">
    <property type="entry name" value="OMP_Chaperone_SurA"/>
</dbReference>
<dbReference type="InterPro" id="IPR046357">
    <property type="entry name" value="PPIase_dom_sf"/>
</dbReference>
<dbReference type="InterPro" id="IPR000297">
    <property type="entry name" value="PPIase_PpiC"/>
</dbReference>
<dbReference type="InterPro" id="IPR023034">
    <property type="entry name" value="PPIase_SurA"/>
</dbReference>
<dbReference type="InterPro" id="IPR015391">
    <property type="entry name" value="SurA_N"/>
</dbReference>
<dbReference type="InterPro" id="IPR027304">
    <property type="entry name" value="Trigger_fact/SurA_dom_sf"/>
</dbReference>
<dbReference type="PANTHER" id="PTHR47637">
    <property type="entry name" value="CHAPERONE SURA"/>
    <property type="match status" value="1"/>
</dbReference>
<dbReference type="PANTHER" id="PTHR47637:SF1">
    <property type="entry name" value="CHAPERONE SURA"/>
    <property type="match status" value="1"/>
</dbReference>
<dbReference type="Pfam" id="PF00639">
    <property type="entry name" value="Rotamase"/>
    <property type="match status" value="1"/>
</dbReference>
<dbReference type="Pfam" id="PF13616">
    <property type="entry name" value="Rotamase_3"/>
    <property type="match status" value="1"/>
</dbReference>
<dbReference type="Pfam" id="PF09312">
    <property type="entry name" value="SurA_N"/>
    <property type="match status" value="1"/>
</dbReference>
<dbReference type="SUPFAM" id="SSF54534">
    <property type="entry name" value="FKBP-like"/>
    <property type="match status" value="2"/>
</dbReference>
<dbReference type="SUPFAM" id="SSF109998">
    <property type="entry name" value="Triger factor/SurA peptide-binding domain-like"/>
    <property type="match status" value="1"/>
</dbReference>
<dbReference type="PROSITE" id="PS50198">
    <property type="entry name" value="PPIC_PPIASE_2"/>
    <property type="match status" value="2"/>
</dbReference>
<protein>
    <recommendedName>
        <fullName evidence="1">Chaperone SurA</fullName>
    </recommendedName>
    <alternativeName>
        <fullName evidence="1">Peptidyl-prolyl cis-trans isomerase SurA</fullName>
        <shortName evidence="1">PPIase SurA</shortName>
        <ecNumber evidence="1">5.2.1.8</ecNumber>
    </alternativeName>
    <alternativeName>
        <fullName evidence="1">Rotamase SurA</fullName>
    </alternativeName>
</protein>
<keyword id="KW-0143">Chaperone</keyword>
<keyword id="KW-0413">Isomerase</keyword>
<keyword id="KW-0574">Periplasm</keyword>
<keyword id="KW-1185">Reference proteome</keyword>
<keyword id="KW-0677">Repeat</keyword>
<keyword id="KW-0697">Rotamase</keyword>
<keyword id="KW-0732">Signal</keyword>
<proteinExistence type="inferred from homology"/>
<accession>Q88A44</accession>
<reference key="1">
    <citation type="journal article" date="2003" name="Proc. Natl. Acad. Sci. U.S.A.">
        <title>The complete genome sequence of the Arabidopsis and tomato pathogen Pseudomonas syringae pv. tomato DC3000.</title>
        <authorList>
            <person name="Buell C.R."/>
            <person name="Joardar V."/>
            <person name="Lindeberg M."/>
            <person name="Selengut J."/>
            <person name="Paulsen I.T."/>
            <person name="Gwinn M.L."/>
            <person name="Dodson R.J."/>
            <person name="DeBoy R.T."/>
            <person name="Durkin A.S."/>
            <person name="Kolonay J.F."/>
            <person name="Madupu R."/>
            <person name="Daugherty S.C."/>
            <person name="Brinkac L.M."/>
            <person name="Beanan M.J."/>
            <person name="Haft D.H."/>
            <person name="Nelson W.C."/>
            <person name="Davidsen T.M."/>
            <person name="Zafar N."/>
            <person name="Zhou L."/>
            <person name="Liu J."/>
            <person name="Yuan Q."/>
            <person name="Khouri H.M."/>
            <person name="Fedorova N.B."/>
            <person name="Tran B."/>
            <person name="Russell D."/>
            <person name="Berry K.J."/>
            <person name="Utterback T.R."/>
            <person name="Van Aken S.E."/>
            <person name="Feldblyum T.V."/>
            <person name="D'Ascenzo M."/>
            <person name="Deng W.-L."/>
            <person name="Ramos A.R."/>
            <person name="Alfano J.R."/>
            <person name="Cartinhour S."/>
            <person name="Chatterjee A.K."/>
            <person name="Delaney T.P."/>
            <person name="Lazarowitz S.G."/>
            <person name="Martin G.B."/>
            <person name="Schneider D.J."/>
            <person name="Tang X."/>
            <person name="Bender C.L."/>
            <person name="White O."/>
            <person name="Fraser C.M."/>
            <person name="Collmer A."/>
        </authorList>
    </citation>
    <scope>NUCLEOTIDE SEQUENCE [LARGE SCALE GENOMIC DNA]</scope>
    <source>
        <strain>ATCC BAA-871 / DC3000</strain>
    </source>
</reference>
<name>SURA_PSESM</name>
<feature type="signal peptide" evidence="1">
    <location>
        <begin position="1"/>
        <end position="13"/>
    </location>
</feature>
<feature type="chain" id="PRO_0000270031" description="Chaperone SurA">
    <location>
        <begin position="14"/>
        <end position="428"/>
    </location>
</feature>
<feature type="domain" description="PpiC 1" evidence="1">
    <location>
        <begin position="164"/>
        <end position="265"/>
    </location>
</feature>
<feature type="domain" description="PpiC 2" evidence="1">
    <location>
        <begin position="276"/>
        <end position="375"/>
    </location>
</feature>
<comment type="function">
    <text evidence="1">Chaperone involved in the correct folding and assembly of outer membrane proteins. Recognizes specific patterns of aromatic residues and the orientation of their side chains, which are found more frequently in integral outer membrane proteins. May act in both early periplasmic and late outer membrane-associated steps of protein maturation.</text>
</comment>
<comment type="catalytic activity">
    <reaction evidence="1">
        <text>[protein]-peptidylproline (omega=180) = [protein]-peptidylproline (omega=0)</text>
        <dbReference type="Rhea" id="RHEA:16237"/>
        <dbReference type="Rhea" id="RHEA-COMP:10747"/>
        <dbReference type="Rhea" id="RHEA-COMP:10748"/>
        <dbReference type="ChEBI" id="CHEBI:83833"/>
        <dbReference type="ChEBI" id="CHEBI:83834"/>
        <dbReference type="EC" id="5.2.1.8"/>
    </reaction>
</comment>
<comment type="subcellular location">
    <subcellularLocation>
        <location evidence="1">Periplasm</location>
    </subcellularLocation>
    <text evidence="1">Is capable of associating with the outer membrane.</text>
</comment>
<comment type="domain">
    <text evidence="1">The PPIase activity resides only in the second parvulin domain. The N-terminal region and the C-terminal tail are necessary and sufficient for the chaperone activity of SurA. The PPIase activity is dispensable for SurA to function as a chaperone. The N-terminal region and the C-terminal tail are also required for porin recognition.</text>
</comment>